<comment type="function">
    <text evidence="1">Major thyroid hormone transport protein in serum.</text>
</comment>
<comment type="subcellular location">
    <subcellularLocation>
        <location>Secreted</location>
    </subcellularLocation>
</comment>
<comment type="tissue specificity">
    <text>Expressed by the liver and secreted in plasma.</text>
</comment>
<comment type="polymorphism">
    <text evidence="3">The allele with Asn-245 has a significantly greater affinity for thyroxine than the His-245 allele found in Meishan boars. This polymorphism is a candidate for the causative variation affecting testis size in boars.</text>
</comment>
<comment type="similarity">
    <text evidence="4">Belongs to the serpin family.</text>
</comment>
<keyword id="KW-0325">Glycoprotein</keyword>
<keyword id="KW-1185">Reference proteome</keyword>
<keyword id="KW-0964">Secreted</keyword>
<keyword id="KW-0732">Signal</keyword>
<proteinExistence type="evidence at transcript level"/>
<protein>
    <recommendedName>
        <fullName>Thyroxine-binding globulin</fullName>
    </recommendedName>
    <alternativeName>
        <fullName>Serpin A7</fullName>
    </alternativeName>
    <alternativeName>
        <fullName>T4-binding globulin</fullName>
    </alternativeName>
</protein>
<evidence type="ECO:0000250" key="1"/>
<evidence type="ECO:0000255" key="2"/>
<evidence type="ECO:0000269" key="3">
    <source>
    </source>
</evidence>
<evidence type="ECO:0000305" key="4"/>
<organism>
    <name type="scientific">Sus scrofa</name>
    <name type="common">Pig</name>
    <dbReference type="NCBI Taxonomy" id="9823"/>
    <lineage>
        <taxon>Eukaryota</taxon>
        <taxon>Metazoa</taxon>
        <taxon>Chordata</taxon>
        <taxon>Craniata</taxon>
        <taxon>Vertebrata</taxon>
        <taxon>Euteleostomi</taxon>
        <taxon>Mammalia</taxon>
        <taxon>Eutheria</taxon>
        <taxon>Laurasiatheria</taxon>
        <taxon>Artiodactyla</taxon>
        <taxon>Suina</taxon>
        <taxon>Suidae</taxon>
        <taxon>Sus</taxon>
    </lineage>
</organism>
<reference key="1">
    <citation type="journal article" date="2002" name="Mol. Cell. Endocrinol.">
        <title>Characterization and primary structures of bovine and porcine thyroxine-binding globulin.</title>
        <authorList>
            <person name="Janssen O.E."/>
            <person name="Lahner H."/>
            <person name="Grasberger H."/>
            <person name="Spring S.A."/>
            <person name="Saller B."/>
            <person name="Mann K."/>
            <person name="Refetoff S."/>
            <person name="Einspanier R."/>
        </authorList>
    </citation>
    <scope>NUCLEOTIDE SEQUENCE [MRNA]</scope>
</reference>
<reference key="2">
    <citation type="journal article" date="2005" name="Biol. Reprod.">
        <title>A variant of porcine thyroxine-binding globulin has reduced affinity for thyroxine and is associated with testis size.</title>
        <authorList>
            <person name="Nonneman D."/>
            <person name="Rohrer G.A."/>
            <person name="Wise T.H."/>
            <person name="Lunstra D.D."/>
            <person name="Ford J.J."/>
        </authorList>
    </citation>
    <scope>NUCLEOTIDE SEQUENCE [GENOMIC DNA]</scope>
    <scope>VARIANT ASN-245</scope>
</reference>
<name>THBG_PIG</name>
<sequence>MPLFLYMVLLVLGIHCVQPNISEGKVTSCLSPQQNATLHKMSSINADFAFNLYRRFAVETPDQNIFFSPVSISAALAMLSFGACSSTQTQILESLGYNLTEMPMAEIQQGFQHLICSLNFPKKELELQMGNALFIEKQLKPLAKFLDDVKNLYETEVFSTDFSNVSAAQQELNSHVERQTKGKIVGLIPDLKPNTIMVLVNYICFKAQWANPFDPSKTEEGSSFLVDKTTTVQVPMMHQMEQYYHLVDTELNCTVLQMDYSKNALALFVLPNEGQMEWVEGAMSSKILKKWNRLLQKGWIDLFVPKFSMSATYDLGDILLKMGIQDAFADNADFSGLTKDNGLKLSNAAHKAVLNIGEKGTEAIPEVTFLNQPKITLLHPIIQFDRSFLLLILEKSTRSILFLGKVVDPTEA</sequence>
<dbReference type="EMBL" id="AF204929">
    <property type="protein sequence ID" value="AAF15302.1"/>
    <property type="molecule type" value="mRNA"/>
</dbReference>
<dbReference type="EMBL" id="AY550250">
    <property type="protein sequence ID" value="AAT40589.1"/>
    <property type="molecule type" value="Genomic_DNA"/>
</dbReference>
<dbReference type="RefSeq" id="NP_999223.1">
    <property type="nucleotide sequence ID" value="NM_214058.1"/>
</dbReference>
<dbReference type="SMR" id="Q9TT35"/>
<dbReference type="FunCoup" id="Q9TT35">
    <property type="interactions" value="150"/>
</dbReference>
<dbReference type="STRING" id="9823.ENSSSCP00000013341"/>
<dbReference type="MEROPS" id="I04.955"/>
<dbReference type="GlyCosmos" id="Q9TT35">
    <property type="glycosylation" value="5 sites, No reported glycans"/>
</dbReference>
<dbReference type="GlyGen" id="Q9TT35">
    <property type="glycosylation" value="5 sites"/>
</dbReference>
<dbReference type="PaxDb" id="9823-ENSSSCP00000013341"/>
<dbReference type="PeptideAtlas" id="Q9TT35"/>
<dbReference type="GeneID" id="397125"/>
<dbReference type="KEGG" id="ssc:397125"/>
<dbReference type="CTD" id="6906"/>
<dbReference type="eggNOG" id="KOG2392">
    <property type="taxonomic scope" value="Eukaryota"/>
</dbReference>
<dbReference type="InParanoid" id="Q9TT35"/>
<dbReference type="OrthoDB" id="671595at2759"/>
<dbReference type="Proteomes" id="UP000008227">
    <property type="component" value="Unplaced"/>
</dbReference>
<dbReference type="Proteomes" id="UP000314985">
    <property type="component" value="Unplaced"/>
</dbReference>
<dbReference type="Proteomes" id="UP000694570">
    <property type="component" value="Unplaced"/>
</dbReference>
<dbReference type="Proteomes" id="UP000694571">
    <property type="component" value="Unplaced"/>
</dbReference>
<dbReference type="Proteomes" id="UP000694720">
    <property type="component" value="Unplaced"/>
</dbReference>
<dbReference type="Proteomes" id="UP000694722">
    <property type="component" value="Unplaced"/>
</dbReference>
<dbReference type="Proteomes" id="UP000694723">
    <property type="component" value="Unplaced"/>
</dbReference>
<dbReference type="Proteomes" id="UP000694724">
    <property type="component" value="Unplaced"/>
</dbReference>
<dbReference type="Proteomes" id="UP000694725">
    <property type="component" value="Unplaced"/>
</dbReference>
<dbReference type="Proteomes" id="UP000694726">
    <property type="component" value="Unplaced"/>
</dbReference>
<dbReference type="Proteomes" id="UP000694727">
    <property type="component" value="Unplaced"/>
</dbReference>
<dbReference type="Proteomes" id="UP000694728">
    <property type="component" value="Unplaced"/>
</dbReference>
<dbReference type="GO" id="GO:0005615">
    <property type="term" value="C:extracellular space"/>
    <property type="evidence" value="ECO:0000318"/>
    <property type="project" value="GO_Central"/>
</dbReference>
<dbReference type="GO" id="GO:0004867">
    <property type="term" value="F:serine-type endopeptidase inhibitor activity"/>
    <property type="evidence" value="ECO:0000318"/>
    <property type="project" value="GO_Central"/>
</dbReference>
<dbReference type="CDD" id="cd19555">
    <property type="entry name" value="serpinA7_TBG"/>
    <property type="match status" value="1"/>
</dbReference>
<dbReference type="FunFam" id="2.30.39.10:FF:000003">
    <property type="entry name" value="alpha-1-antitrypsin isoform X1"/>
    <property type="match status" value="1"/>
</dbReference>
<dbReference type="FunFam" id="3.30.497.10:FF:000001">
    <property type="entry name" value="Serine protease inhibitor"/>
    <property type="match status" value="1"/>
</dbReference>
<dbReference type="FunFam" id="2.10.310.10:FF:000001">
    <property type="entry name" value="Serpin family A member 1"/>
    <property type="match status" value="1"/>
</dbReference>
<dbReference type="Gene3D" id="2.30.39.10">
    <property type="entry name" value="Alpha-1-antitrypsin, domain 1"/>
    <property type="match status" value="1"/>
</dbReference>
<dbReference type="Gene3D" id="3.30.497.10">
    <property type="entry name" value="Antithrombin, subunit I, domain 2"/>
    <property type="match status" value="1"/>
</dbReference>
<dbReference type="Gene3D" id="2.10.310.10">
    <property type="entry name" value="Serpins superfamily"/>
    <property type="match status" value="1"/>
</dbReference>
<dbReference type="InterPro" id="IPR023795">
    <property type="entry name" value="Serpin_CS"/>
</dbReference>
<dbReference type="InterPro" id="IPR023796">
    <property type="entry name" value="Serpin_dom"/>
</dbReference>
<dbReference type="InterPro" id="IPR000215">
    <property type="entry name" value="Serpin_fam"/>
</dbReference>
<dbReference type="InterPro" id="IPR036186">
    <property type="entry name" value="Serpin_sf"/>
</dbReference>
<dbReference type="InterPro" id="IPR042178">
    <property type="entry name" value="Serpin_sf_1"/>
</dbReference>
<dbReference type="InterPro" id="IPR042185">
    <property type="entry name" value="Serpin_sf_2"/>
</dbReference>
<dbReference type="PANTHER" id="PTHR11461">
    <property type="entry name" value="SERINE PROTEASE INHIBITOR, SERPIN"/>
    <property type="match status" value="1"/>
</dbReference>
<dbReference type="PANTHER" id="PTHR11461:SF375">
    <property type="entry name" value="THYROXINE-BINDING GLOBULIN"/>
    <property type="match status" value="1"/>
</dbReference>
<dbReference type="Pfam" id="PF00079">
    <property type="entry name" value="Serpin"/>
    <property type="match status" value="1"/>
</dbReference>
<dbReference type="SMART" id="SM00093">
    <property type="entry name" value="SERPIN"/>
    <property type="match status" value="1"/>
</dbReference>
<dbReference type="SUPFAM" id="SSF56574">
    <property type="entry name" value="Serpins"/>
    <property type="match status" value="1"/>
</dbReference>
<dbReference type="PROSITE" id="PS00284">
    <property type="entry name" value="SERPIN"/>
    <property type="match status" value="1"/>
</dbReference>
<feature type="signal peptide" evidence="2">
    <location>
        <begin position="1"/>
        <end position="16"/>
    </location>
</feature>
<feature type="chain" id="PRO_0000032439" description="Thyroxine-binding globulin">
    <location>
        <begin position="17"/>
        <end position="412"/>
    </location>
</feature>
<feature type="binding site" evidence="1">
    <location>
        <position position="292"/>
    </location>
    <ligand>
        <name>thyroxine</name>
        <dbReference type="ChEBI" id="CHEBI:305790"/>
    </ligand>
</feature>
<feature type="binding site" evidence="1">
    <location>
        <position position="395"/>
    </location>
    <ligand>
        <name>thyroxine</name>
        <dbReference type="ChEBI" id="CHEBI:305790"/>
    </ligand>
</feature>
<feature type="glycosylation site" description="N-linked (GlcNAc...) asparagine" evidence="2">
    <location>
        <position position="20"/>
    </location>
</feature>
<feature type="glycosylation site" description="N-linked (GlcNAc...) asparagine" evidence="2">
    <location>
        <position position="35"/>
    </location>
</feature>
<feature type="glycosylation site" description="N-linked (GlcNAc...) asparagine" evidence="2">
    <location>
        <position position="98"/>
    </location>
</feature>
<feature type="glycosylation site" description="N-linked (GlcNAc...) asparagine" evidence="2">
    <location>
        <position position="164"/>
    </location>
</feature>
<feature type="glycosylation site" description="N-linked (GlcNAc...) asparagine" evidence="2">
    <location>
        <position position="252"/>
    </location>
</feature>
<feature type="sequence variant" evidence="3">
    <original>H</original>
    <variation>N</variation>
    <location>
        <position position="245"/>
    </location>
</feature>
<feature type="sequence conflict" description="In Ref. 2; AAT40589." evidence="4" ref="2">
    <original>SF</original>
    <variation>RL</variation>
    <location>
        <begin position="223"/>
        <end position="224"/>
    </location>
</feature>
<gene>
    <name type="primary">SERPINA7</name>
    <name type="synonym">TBG</name>
</gene>
<accession>Q9TT35</accession>
<accession>Q5QGZ0</accession>